<dbReference type="EC" id="6.2.1.17"/>
<dbReference type="EMBL" id="U51879">
    <property type="protein sequence ID" value="AAC44817.2"/>
    <property type="molecule type" value="Genomic_DNA"/>
</dbReference>
<dbReference type="EMBL" id="AE006468">
    <property type="protein sequence ID" value="AAL19325.1"/>
    <property type="molecule type" value="Genomic_DNA"/>
</dbReference>
<dbReference type="RefSeq" id="NP_459366.1">
    <property type="nucleotide sequence ID" value="NC_003197.2"/>
</dbReference>
<dbReference type="RefSeq" id="WP_000010229.1">
    <property type="nucleotide sequence ID" value="NC_003197.2"/>
</dbReference>
<dbReference type="SMR" id="P55912"/>
<dbReference type="STRING" id="99287.STM0371"/>
<dbReference type="PaxDb" id="99287-STM0371"/>
<dbReference type="GeneID" id="1251890"/>
<dbReference type="KEGG" id="stm:STM0371"/>
<dbReference type="PATRIC" id="fig|99287.12.peg.393"/>
<dbReference type="HOGENOM" id="CLU_000022_3_5_6"/>
<dbReference type="OMA" id="VDNWWST"/>
<dbReference type="PhylomeDB" id="P55912"/>
<dbReference type="BioCyc" id="MetaCyc:MONOMER-62"/>
<dbReference type="BioCyc" id="SENT99287:STM0371-MONOMER"/>
<dbReference type="UniPathway" id="UPA00946"/>
<dbReference type="Proteomes" id="UP000001014">
    <property type="component" value="Chromosome"/>
</dbReference>
<dbReference type="GO" id="GO:0005524">
    <property type="term" value="F:ATP binding"/>
    <property type="evidence" value="ECO:0007669"/>
    <property type="project" value="UniProtKB-KW"/>
</dbReference>
<dbReference type="GO" id="GO:0050218">
    <property type="term" value="F:propionate-CoA ligase activity"/>
    <property type="evidence" value="ECO:0000314"/>
    <property type="project" value="CACAO"/>
</dbReference>
<dbReference type="GO" id="GO:0019629">
    <property type="term" value="P:propionate catabolic process, 2-methylcitrate cycle"/>
    <property type="evidence" value="ECO:0007669"/>
    <property type="project" value="InterPro"/>
</dbReference>
<dbReference type="FunFam" id="3.40.50.12780:FF:000001">
    <property type="entry name" value="Acetyl-coenzyme A synthetase"/>
    <property type="match status" value="1"/>
</dbReference>
<dbReference type="Gene3D" id="3.30.300.30">
    <property type="match status" value="1"/>
</dbReference>
<dbReference type="Gene3D" id="3.40.50.12780">
    <property type="entry name" value="N-terminal domain of ligase-like"/>
    <property type="match status" value="1"/>
</dbReference>
<dbReference type="InterPro" id="IPR032387">
    <property type="entry name" value="ACAS_N"/>
</dbReference>
<dbReference type="InterPro" id="IPR025110">
    <property type="entry name" value="AMP-bd_C"/>
</dbReference>
<dbReference type="InterPro" id="IPR045851">
    <property type="entry name" value="AMP-bd_C_sf"/>
</dbReference>
<dbReference type="InterPro" id="IPR020845">
    <property type="entry name" value="AMP-binding_CS"/>
</dbReference>
<dbReference type="InterPro" id="IPR000873">
    <property type="entry name" value="AMP-dep_synth/lig_dom"/>
</dbReference>
<dbReference type="InterPro" id="IPR042099">
    <property type="entry name" value="ANL_N_sf"/>
</dbReference>
<dbReference type="InterPro" id="IPR012694">
    <property type="entry name" value="Propion_PrpE"/>
</dbReference>
<dbReference type="NCBIfam" id="NF001208">
    <property type="entry name" value="PRK00174.1"/>
    <property type="match status" value="1"/>
</dbReference>
<dbReference type="NCBIfam" id="NF007815">
    <property type="entry name" value="PRK10524.1"/>
    <property type="match status" value="1"/>
</dbReference>
<dbReference type="NCBIfam" id="TIGR02316">
    <property type="entry name" value="propion_prpE"/>
    <property type="match status" value="1"/>
</dbReference>
<dbReference type="PANTHER" id="PTHR43347">
    <property type="entry name" value="ACYL-COA SYNTHETASE"/>
    <property type="match status" value="1"/>
</dbReference>
<dbReference type="PANTHER" id="PTHR43347:SF3">
    <property type="entry name" value="ACYL-COA SYNTHETASE SHORT-CHAIN FAMILY MEMBER 3, MITOCHONDRIAL"/>
    <property type="match status" value="1"/>
</dbReference>
<dbReference type="Pfam" id="PF16177">
    <property type="entry name" value="ACAS_N"/>
    <property type="match status" value="1"/>
</dbReference>
<dbReference type="Pfam" id="PF00501">
    <property type="entry name" value="AMP-binding"/>
    <property type="match status" value="1"/>
</dbReference>
<dbReference type="Pfam" id="PF13193">
    <property type="entry name" value="AMP-binding_C"/>
    <property type="match status" value="1"/>
</dbReference>
<dbReference type="SUPFAM" id="SSF56801">
    <property type="entry name" value="Acetyl-CoA synthetase-like"/>
    <property type="match status" value="1"/>
</dbReference>
<dbReference type="PROSITE" id="PS00455">
    <property type="entry name" value="AMP_BINDING"/>
    <property type="match status" value="1"/>
</dbReference>
<reference key="1">
    <citation type="journal article" date="1997" name="J. Bacteriol.">
        <title>Propionate catabolism in Salmonella typhimurium LT2: two divergently transcribed units comprise the prp locus at 8.5 centisomes, prpR encodes a member of the sigma-54 family of activators, and the prpBCDE genes constitute an operon.</title>
        <authorList>
            <person name="Horswill A.R."/>
            <person name="Escalante-Semerena J.C."/>
        </authorList>
    </citation>
    <scope>NUCLEOTIDE SEQUENCE [GENOMIC DNA]</scope>
    <source>
        <strain>LT2</strain>
    </source>
</reference>
<reference key="2">
    <citation type="journal article" date="1999" name="Microbiology">
        <title>The prpE gene of Salmonella typhimurium LT2 encodes propionyl-CoA synthetase.</title>
        <authorList>
            <person name="Horswill A.R."/>
            <person name="Escalante-Semerena J.C."/>
        </authorList>
    </citation>
    <scope>SEQUENCE REVISION TO 464 AND C-TERMINUS</scope>
    <scope>FUNCTION</scope>
    <source>
        <strain>LT2</strain>
    </source>
</reference>
<reference key="3">
    <citation type="journal article" date="2001" name="Nature">
        <title>Complete genome sequence of Salmonella enterica serovar Typhimurium LT2.</title>
        <authorList>
            <person name="McClelland M."/>
            <person name="Sanderson K.E."/>
            <person name="Spieth J."/>
            <person name="Clifton S.W."/>
            <person name="Latreille P."/>
            <person name="Courtney L."/>
            <person name="Porwollik S."/>
            <person name="Ali J."/>
            <person name="Dante M."/>
            <person name="Du F."/>
            <person name="Hou S."/>
            <person name="Layman D."/>
            <person name="Leonard S."/>
            <person name="Nguyen C."/>
            <person name="Scott K."/>
            <person name="Holmes A."/>
            <person name="Grewal N."/>
            <person name="Mulvaney E."/>
            <person name="Ryan E."/>
            <person name="Sun H."/>
            <person name="Florea L."/>
            <person name="Miller W."/>
            <person name="Stoneking T."/>
            <person name="Nhan M."/>
            <person name="Waterston R."/>
            <person name="Wilson R.K."/>
        </authorList>
    </citation>
    <scope>NUCLEOTIDE SEQUENCE [LARGE SCALE GENOMIC DNA]</scope>
    <source>
        <strain>LT2 / SGSC1412 / ATCC 700720</strain>
    </source>
</reference>
<reference key="4">
    <citation type="journal article" date="1999" name="J. Bacteriol.">
        <title>Salmonella typhimurium LT2 catabolizes propionate via the 2-methylcitric acid cycle.</title>
        <authorList>
            <person name="Horswill A.R."/>
            <person name="Escalante-Semerena J.C."/>
        </authorList>
    </citation>
    <scope>FUNCTION</scope>
    <scope>PATHWAY</scope>
</reference>
<keyword id="KW-0067">ATP-binding</keyword>
<keyword id="KW-0436">Ligase</keyword>
<keyword id="KW-0547">Nucleotide-binding</keyword>
<keyword id="KW-1185">Reference proteome</keyword>
<evidence type="ECO:0000269" key="1">
    <source>
    </source>
</evidence>
<evidence type="ECO:0000269" key="2">
    <source>
    </source>
</evidence>
<evidence type="ECO:0000305" key="3"/>
<accession>P55912</accession>
<feature type="chain" id="PRO_0000193189" description="Propionate--CoA ligase">
    <location>
        <begin position="1"/>
        <end position="628"/>
    </location>
</feature>
<gene>
    <name type="primary">prpE</name>
    <name type="ordered locus">STM0371</name>
</gene>
<protein>
    <recommendedName>
        <fullName>Propionate--CoA ligase</fullName>
        <ecNumber>6.2.1.17</ecNumber>
    </recommendedName>
    <alternativeName>
        <fullName>Propionyl-CoA synthetase</fullName>
    </alternativeName>
</protein>
<name>PRPE_SALTY</name>
<proteinExistence type="inferred from homology"/>
<comment type="function">
    <text evidence="1 2">Catalyzes the synthesis of propionyl-CoA from propionate and CoA. Also converts acetate to acetyl-CoA but with a lower specific activity.</text>
</comment>
<comment type="catalytic activity">
    <reaction>
        <text>propanoate + ATP + CoA = propanoyl-CoA + AMP + diphosphate</text>
        <dbReference type="Rhea" id="RHEA:20373"/>
        <dbReference type="ChEBI" id="CHEBI:17272"/>
        <dbReference type="ChEBI" id="CHEBI:30616"/>
        <dbReference type="ChEBI" id="CHEBI:33019"/>
        <dbReference type="ChEBI" id="CHEBI:57287"/>
        <dbReference type="ChEBI" id="CHEBI:57392"/>
        <dbReference type="ChEBI" id="CHEBI:456215"/>
        <dbReference type="EC" id="6.2.1.17"/>
    </reaction>
</comment>
<comment type="pathway">
    <text evidence="2">Organic acid metabolism; propanoate degradation.</text>
</comment>
<comment type="similarity">
    <text evidence="3">Belongs to the ATP-dependent AMP-binding enzyme family.</text>
</comment>
<organism>
    <name type="scientific">Salmonella typhimurium (strain LT2 / SGSC1412 / ATCC 700720)</name>
    <dbReference type="NCBI Taxonomy" id="99287"/>
    <lineage>
        <taxon>Bacteria</taxon>
        <taxon>Pseudomonadati</taxon>
        <taxon>Pseudomonadota</taxon>
        <taxon>Gammaproteobacteria</taxon>
        <taxon>Enterobacterales</taxon>
        <taxon>Enterobacteriaceae</taxon>
        <taxon>Salmonella</taxon>
    </lineage>
</organism>
<sequence>MSFSEFYQRSINEPEAFWAEQARRIDWRQPFTQTLDHSRPPFARWFCGGTTNLCHNAVDRWRDKQPEALALIAVSSETDEERTFTFSQLHDEVNIVAAMLLSLGVQRGDRVLVYMPMIAEAQITLLACARIGAIHSVVFGGFASHSVAARIDDARPALIVSADAGARGGKILPYKKLLDDAIAQAQHQPKHVLLVDRGLAKMAWVDGRDLDFATLRQQHLGASVPVAWLESNETSCILYTSGTTGKPKGVQRDVGGYAVALATSMDTIFGGKAGGVFFCASDIGWVVGHSYIVYAPLLAGMATIVYEGLPTYPDCGVWWKIVEKYQVNRMFSAPTAIRVLKKFPTAQIRNHDLSSLEALYLAGEPLDEPTASWVTETLGVPVIDNYWQTESGWPIMALARALDDRPSRLGSPGVPMYGYNVQLLNEVTGEPCGINEKGMLVIEGPLPPGCIQTIWGDDARFVKTYWSLFNRQVYATFDWGIRDAEGYYFILGRTDDVINIAGHRLGTREIEESISSYPNVAEVAVVGIKDALKGQVAVAFVIPKQSDTLADREAARDEENAIMALVDNQIGHFGRPAHVWFVSQLPKTRSGKMLRRTIQAICEGRDPGDLTTIDDPASLQQIRQAIEE</sequence>